<evidence type="ECO:0000255" key="1">
    <source>
        <dbReference type="HAMAP-Rule" id="MF_01331"/>
    </source>
</evidence>
<evidence type="ECO:0000305" key="2"/>
<proteinExistence type="inferred from homology"/>
<accession>B0KK72</accession>
<dbReference type="EMBL" id="CP000926">
    <property type="protein sequence ID" value="ABY96400.1"/>
    <property type="molecule type" value="Genomic_DNA"/>
</dbReference>
<dbReference type="RefSeq" id="WP_003103908.1">
    <property type="nucleotide sequence ID" value="NC_010322.1"/>
</dbReference>
<dbReference type="SMR" id="B0KK72"/>
<dbReference type="GeneID" id="98636788"/>
<dbReference type="KEGG" id="ppg:PputGB1_0489"/>
<dbReference type="eggNOG" id="COG0091">
    <property type="taxonomic scope" value="Bacteria"/>
</dbReference>
<dbReference type="HOGENOM" id="CLU_083987_3_3_6"/>
<dbReference type="Proteomes" id="UP000002157">
    <property type="component" value="Chromosome"/>
</dbReference>
<dbReference type="GO" id="GO:0022625">
    <property type="term" value="C:cytosolic large ribosomal subunit"/>
    <property type="evidence" value="ECO:0007669"/>
    <property type="project" value="TreeGrafter"/>
</dbReference>
<dbReference type="GO" id="GO:0019843">
    <property type="term" value="F:rRNA binding"/>
    <property type="evidence" value="ECO:0007669"/>
    <property type="project" value="UniProtKB-UniRule"/>
</dbReference>
<dbReference type="GO" id="GO:0003735">
    <property type="term" value="F:structural constituent of ribosome"/>
    <property type="evidence" value="ECO:0007669"/>
    <property type="project" value="InterPro"/>
</dbReference>
<dbReference type="GO" id="GO:0006412">
    <property type="term" value="P:translation"/>
    <property type="evidence" value="ECO:0007669"/>
    <property type="project" value="UniProtKB-UniRule"/>
</dbReference>
<dbReference type="CDD" id="cd00336">
    <property type="entry name" value="Ribosomal_L22"/>
    <property type="match status" value="1"/>
</dbReference>
<dbReference type="FunFam" id="3.90.470.10:FF:000001">
    <property type="entry name" value="50S ribosomal protein L22"/>
    <property type="match status" value="1"/>
</dbReference>
<dbReference type="Gene3D" id="3.90.470.10">
    <property type="entry name" value="Ribosomal protein L22/L17"/>
    <property type="match status" value="1"/>
</dbReference>
<dbReference type="HAMAP" id="MF_01331_B">
    <property type="entry name" value="Ribosomal_uL22_B"/>
    <property type="match status" value="1"/>
</dbReference>
<dbReference type="InterPro" id="IPR001063">
    <property type="entry name" value="Ribosomal_uL22"/>
</dbReference>
<dbReference type="InterPro" id="IPR005727">
    <property type="entry name" value="Ribosomal_uL22_bac/chlpt-type"/>
</dbReference>
<dbReference type="InterPro" id="IPR047867">
    <property type="entry name" value="Ribosomal_uL22_bac/org-type"/>
</dbReference>
<dbReference type="InterPro" id="IPR018260">
    <property type="entry name" value="Ribosomal_uL22_CS"/>
</dbReference>
<dbReference type="InterPro" id="IPR036394">
    <property type="entry name" value="Ribosomal_uL22_sf"/>
</dbReference>
<dbReference type="NCBIfam" id="TIGR01044">
    <property type="entry name" value="rplV_bact"/>
    <property type="match status" value="1"/>
</dbReference>
<dbReference type="PANTHER" id="PTHR13501">
    <property type="entry name" value="CHLOROPLAST 50S RIBOSOMAL PROTEIN L22-RELATED"/>
    <property type="match status" value="1"/>
</dbReference>
<dbReference type="PANTHER" id="PTHR13501:SF8">
    <property type="entry name" value="LARGE RIBOSOMAL SUBUNIT PROTEIN UL22M"/>
    <property type="match status" value="1"/>
</dbReference>
<dbReference type="Pfam" id="PF00237">
    <property type="entry name" value="Ribosomal_L22"/>
    <property type="match status" value="1"/>
</dbReference>
<dbReference type="SUPFAM" id="SSF54843">
    <property type="entry name" value="Ribosomal protein L22"/>
    <property type="match status" value="1"/>
</dbReference>
<dbReference type="PROSITE" id="PS00464">
    <property type="entry name" value="RIBOSOMAL_L22"/>
    <property type="match status" value="1"/>
</dbReference>
<comment type="function">
    <text evidence="1">This protein binds specifically to 23S rRNA; its binding is stimulated by other ribosomal proteins, e.g. L4, L17, and L20. It is important during the early stages of 50S assembly. It makes multiple contacts with different domains of the 23S rRNA in the assembled 50S subunit and ribosome (By similarity).</text>
</comment>
<comment type="function">
    <text evidence="1">The globular domain of the protein is located near the polypeptide exit tunnel on the outside of the subunit, while an extended beta-hairpin is found that lines the wall of the exit tunnel in the center of the 70S ribosome.</text>
</comment>
<comment type="subunit">
    <text evidence="1">Part of the 50S ribosomal subunit.</text>
</comment>
<comment type="similarity">
    <text evidence="1">Belongs to the universal ribosomal protein uL22 family.</text>
</comment>
<protein>
    <recommendedName>
        <fullName evidence="1">Large ribosomal subunit protein uL22</fullName>
    </recommendedName>
    <alternativeName>
        <fullName evidence="2">50S ribosomal protein L22</fullName>
    </alternativeName>
</protein>
<sequence length="110" mass="11911">MEVAAKLSGARISAQKARLVADQIRGKKVGEALNLLAFSSKKAAEIMKKVLESAVANAEHNEGADVDDLKVSTVFVNEGRSLKRIMPRAKGRADRIVKRSCHITVKVADK</sequence>
<reference key="1">
    <citation type="submission" date="2008-01" db="EMBL/GenBank/DDBJ databases">
        <title>Complete sequence of Pseudomonas putida GB-1.</title>
        <authorList>
            <consortium name="US DOE Joint Genome Institute"/>
            <person name="Copeland A."/>
            <person name="Lucas S."/>
            <person name="Lapidus A."/>
            <person name="Barry K."/>
            <person name="Glavina del Rio T."/>
            <person name="Dalin E."/>
            <person name="Tice H."/>
            <person name="Pitluck S."/>
            <person name="Bruce D."/>
            <person name="Goodwin L."/>
            <person name="Chertkov O."/>
            <person name="Brettin T."/>
            <person name="Detter J.C."/>
            <person name="Han C."/>
            <person name="Kuske C.R."/>
            <person name="Schmutz J."/>
            <person name="Larimer F."/>
            <person name="Land M."/>
            <person name="Hauser L."/>
            <person name="Kyrpides N."/>
            <person name="Kim E."/>
            <person name="McCarthy J.K."/>
            <person name="Richardson P."/>
        </authorList>
    </citation>
    <scope>NUCLEOTIDE SEQUENCE [LARGE SCALE GENOMIC DNA]</scope>
    <source>
        <strain>GB-1</strain>
    </source>
</reference>
<organism>
    <name type="scientific">Pseudomonas putida (strain GB-1)</name>
    <dbReference type="NCBI Taxonomy" id="76869"/>
    <lineage>
        <taxon>Bacteria</taxon>
        <taxon>Pseudomonadati</taxon>
        <taxon>Pseudomonadota</taxon>
        <taxon>Gammaproteobacteria</taxon>
        <taxon>Pseudomonadales</taxon>
        <taxon>Pseudomonadaceae</taxon>
        <taxon>Pseudomonas</taxon>
    </lineage>
</organism>
<feature type="chain" id="PRO_1000086563" description="Large ribosomal subunit protein uL22">
    <location>
        <begin position="1"/>
        <end position="110"/>
    </location>
</feature>
<gene>
    <name evidence="1" type="primary">rplV</name>
    <name type="ordered locus">PputGB1_0489</name>
</gene>
<name>RL22_PSEPG</name>
<keyword id="KW-0687">Ribonucleoprotein</keyword>
<keyword id="KW-0689">Ribosomal protein</keyword>
<keyword id="KW-0694">RNA-binding</keyword>
<keyword id="KW-0699">rRNA-binding</keyword>